<dbReference type="EMBL" id="AF014008">
    <property type="protein sequence ID" value="AAB64305.1"/>
    <property type="molecule type" value="mRNA"/>
</dbReference>
<dbReference type="EMBL" id="BC102787">
    <property type="protein sequence ID" value="AAI02788.1"/>
    <property type="molecule type" value="mRNA"/>
</dbReference>
<dbReference type="EMBL" id="BC140655">
    <property type="protein sequence ID" value="AAI40656.1"/>
    <property type="molecule type" value="mRNA"/>
</dbReference>
<dbReference type="EMBL" id="BC142147">
    <property type="protein sequence ID" value="AAI42148.1"/>
    <property type="molecule type" value="mRNA"/>
</dbReference>
<dbReference type="EMBL" id="U19802">
    <property type="protein sequence ID" value="AAA61824.1"/>
    <property type="molecule type" value="mRNA"/>
</dbReference>
<dbReference type="RefSeq" id="NP_776424.1">
    <property type="nucleotide sequence ID" value="NM_173999.3"/>
</dbReference>
<dbReference type="SMR" id="P53348"/>
<dbReference type="FunCoup" id="P53348">
    <property type="interactions" value="680"/>
</dbReference>
<dbReference type="STRING" id="9913.ENSBTAP00000062716"/>
<dbReference type="PaxDb" id="9913-ENSBTAP00000027091"/>
<dbReference type="GeneID" id="281032"/>
<dbReference type="KEGG" id="bta:281032"/>
<dbReference type="CTD" id="694"/>
<dbReference type="eggNOG" id="KOG4006">
    <property type="taxonomic scope" value="Eukaryota"/>
</dbReference>
<dbReference type="HOGENOM" id="CLU_079660_4_0_1"/>
<dbReference type="InParanoid" id="P53348"/>
<dbReference type="OrthoDB" id="19928at2759"/>
<dbReference type="TreeFam" id="TF105272"/>
<dbReference type="Proteomes" id="UP000009136">
    <property type="component" value="Unplaced"/>
</dbReference>
<dbReference type="GO" id="GO:0005737">
    <property type="term" value="C:cytoplasm"/>
    <property type="evidence" value="ECO:0000250"/>
    <property type="project" value="UniProtKB"/>
</dbReference>
<dbReference type="GO" id="GO:0005634">
    <property type="term" value="C:nucleus"/>
    <property type="evidence" value="ECO:0000250"/>
    <property type="project" value="UniProtKB"/>
</dbReference>
<dbReference type="GO" id="GO:0019899">
    <property type="term" value="F:enzyme binding"/>
    <property type="evidence" value="ECO:0000250"/>
    <property type="project" value="UniProtKB"/>
</dbReference>
<dbReference type="GO" id="GO:0008285">
    <property type="term" value="P:negative regulation of cell population proliferation"/>
    <property type="evidence" value="ECO:0000250"/>
    <property type="project" value="UniProtKB"/>
</dbReference>
<dbReference type="GO" id="GO:0045766">
    <property type="term" value="P:positive regulation of angiogenesis"/>
    <property type="evidence" value="ECO:0000250"/>
    <property type="project" value="UniProtKB"/>
</dbReference>
<dbReference type="GO" id="GO:0045603">
    <property type="term" value="P:positive regulation of endothelial cell differentiation"/>
    <property type="evidence" value="ECO:0000250"/>
    <property type="project" value="UniProtKB"/>
</dbReference>
<dbReference type="GO" id="GO:2000271">
    <property type="term" value="P:positive regulation of fibroblast apoptotic process"/>
    <property type="evidence" value="ECO:0000250"/>
    <property type="project" value="UniProtKB"/>
</dbReference>
<dbReference type="FunFam" id="3.90.640.90:FF:000003">
    <property type="entry name" value="BTG1 isoform 1"/>
    <property type="match status" value="1"/>
</dbReference>
<dbReference type="Gene3D" id="3.90.640.90">
    <property type="entry name" value="Anti-proliferative protein, N-terminal domain"/>
    <property type="match status" value="1"/>
</dbReference>
<dbReference type="InterPro" id="IPR002087">
    <property type="entry name" value="Anti_prolifrtn"/>
</dbReference>
<dbReference type="InterPro" id="IPR033332">
    <property type="entry name" value="BTG"/>
</dbReference>
<dbReference type="InterPro" id="IPR036054">
    <property type="entry name" value="BTG-like_sf"/>
</dbReference>
<dbReference type="PANTHER" id="PTHR22978">
    <property type="entry name" value="B-CELL TRANSLOCATION GENE"/>
    <property type="match status" value="1"/>
</dbReference>
<dbReference type="PANTHER" id="PTHR22978:SF30">
    <property type="entry name" value="PROTEIN BTG1"/>
    <property type="match status" value="1"/>
</dbReference>
<dbReference type="Pfam" id="PF07742">
    <property type="entry name" value="BTG"/>
    <property type="match status" value="1"/>
</dbReference>
<dbReference type="PRINTS" id="PR00310">
    <property type="entry name" value="ANTIPRLFBTG1"/>
</dbReference>
<dbReference type="SMART" id="SM00099">
    <property type="entry name" value="btg1"/>
    <property type="match status" value="1"/>
</dbReference>
<dbReference type="SUPFAM" id="SSF160696">
    <property type="entry name" value="BTG domain-like"/>
    <property type="match status" value="1"/>
</dbReference>
<dbReference type="PROSITE" id="PS00960">
    <property type="entry name" value="BTG_1"/>
    <property type="match status" value="1"/>
</dbReference>
<dbReference type="PROSITE" id="PS01203">
    <property type="entry name" value="BTG_2"/>
    <property type="match status" value="1"/>
</dbReference>
<name>BTG1_BOVIN</name>
<protein>
    <recommendedName>
        <fullName>Protein BTG1</fullName>
    </recommendedName>
    <alternativeName>
        <fullName>B-cell translocation gene 1 protein</fullName>
    </alternativeName>
    <alternativeName>
        <fullName>Myocardial vascular inhibition factor</fullName>
        <shortName>VIF</shortName>
    </alternativeName>
</protein>
<feature type="chain" id="PRO_0000143799" description="Protein BTG1">
    <location>
        <begin position="1"/>
        <end position="171"/>
    </location>
</feature>
<feature type="modified residue" description="Phosphoserine" evidence="2">
    <location>
        <position position="159"/>
    </location>
</feature>
<reference key="1">
    <citation type="submission" date="1997-07" db="EMBL/GenBank/DDBJ databases">
        <title>Cloning and cDNA sequence determination of an antiproliferative protein (vascular inhibition factor; VIF) from bovine heart and expression in a porcine model of coronary microembolization.</title>
        <authorList>
            <person name="Zimmermann R."/>
            <person name="Westernacher-Keil D."/>
            <person name="Vosschuulte R."/>
            <person name="Freude B."/>
            <person name="Schaper J."/>
            <person name="Winkler B."/>
            <person name="Schaper W."/>
        </authorList>
    </citation>
    <scope>NUCLEOTIDE SEQUENCE [MRNA]</scope>
    <source>
        <tissue>Heart</tissue>
    </source>
</reference>
<reference key="2">
    <citation type="submission" date="2007-06" db="EMBL/GenBank/DDBJ databases">
        <authorList>
            <consortium name="NIH - Mammalian Gene Collection (MGC) project"/>
        </authorList>
    </citation>
    <scope>NUCLEOTIDE SEQUENCE [LARGE SCALE MRNA]</scope>
    <source>
        <strain>Crossbred X Angus</strain>
        <strain>Hereford</strain>
        <tissue>Fetal skin</tissue>
        <tissue>Ileum</tissue>
        <tissue>Thymus</tissue>
    </source>
</reference>
<reference key="3">
    <citation type="submission" date="1995-02" db="EMBL/GenBank/DDBJ databases">
        <title>Cloning and sequence analysis of a bovine BTG1 cDNA.</title>
        <authorList>
            <person name="Clark T.G."/>
            <person name="Morris J."/>
            <person name="Akamatsu M."/>
            <person name="McGraw R.A."/>
            <person name="Ivarie R."/>
        </authorList>
    </citation>
    <scope>NUCLEOTIDE SEQUENCE [MRNA] OF 44-141</scope>
</reference>
<accession>P53348</accession>
<accession>A5D7R5</accession>
<accession>O18950</accession>
<accession>Q3SZM4</accession>
<proteinExistence type="evidence at transcript level"/>
<gene>
    <name type="primary">BTG1</name>
</gene>
<organism>
    <name type="scientific">Bos taurus</name>
    <name type="common">Bovine</name>
    <dbReference type="NCBI Taxonomy" id="9913"/>
    <lineage>
        <taxon>Eukaryota</taxon>
        <taxon>Metazoa</taxon>
        <taxon>Chordata</taxon>
        <taxon>Craniata</taxon>
        <taxon>Vertebrata</taxon>
        <taxon>Euteleostomi</taxon>
        <taxon>Mammalia</taxon>
        <taxon>Eutheria</taxon>
        <taxon>Laurasiatheria</taxon>
        <taxon>Artiodactyla</taxon>
        <taxon>Ruminantia</taxon>
        <taxon>Pecora</taxon>
        <taxon>Bovidae</taxon>
        <taxon>Bovinae</taxon>
        <taxon>Bos</taxon>
    </lineage>
</organism>
<comment type="function">
    <text>Anti-proliferative protein.</text>
</comment>
<comment type="subunit">
    <text evidence="1">Interacts with CNOT7 and CNOT8.</text>
</comment>
<comment type="similarity">
    <text evidence="3">Belongs to the BTG family.</text>
</comment>
<sequence length="171" mass="19195">MHPFYSRAATMIGEIAAAVSFISKFLRTKGLTSERQLQTFSQSLQELLAEHYKHHWFPEKPCKGSGYRCIRINHKMDPLIGQAAQRIGLSSQELFRLLPSELTLWVDPYEVSYRIGEDGSICVLYEASPAGGSTQNSTNVQMVDSRISCKEELLLGRTSPSKNYNMMTVSG</sequence>
<evidence type="ECO:0000250" key="1"/>
<evidence type="ECO:0000250" key="2">
    <source>
        <dbReference type="UniProtKB" id="P62324"/>
    </source>
</evidence>
<evidence type="ECO:0000305" key="3"/>
<keyword id="KW-0597">Phosphoprotein</keyword>
<keyword id="KW-1185">Reference proteome</keyword>